<accession>P07185</accession>
<accession>A4ULV6</accession>
<accession>A8E796</accession>
<accession>Q9VSP2</accession>
<keyword id="KW-1185">Reference proteome</keyword>
<keyword id="KW-0964">Secreted</keyword>
<keyword id="KW-0732">Signal</keyword>
<protein>
    <recommendedName>
        <fullName>Chorion protein S15</fullName>
    </recommendedName>
</protein>
<proteinExistence type="inferred from homology"/>
<name>CH15_DROME</name>
<feature type="signal peptide" evidence="1">
    <location>
        <begin position="1"/>
        <end position="18"/>
    </location>
</feature>
<feature type="chain" id="PRO_0000089613" description="Chorion protein S15">
    <location>
        <begin position="19"/>
        <end position="115"/>
    </location>
</feature>
<evidence type="ECO:0000255" key="1"/>
<evidence type="ECO:0000305" key="2"/>
<organism>
    <name type="scientific">Drosophila melanogaster</name>
    <name type="common">Fruit fly</name>
    <dbReference type="NCBI Taxonomy" id="7227"/>
    <lineage>
        <taxon>Eukaryota</taxon>
        <taxon>Metazoa</taxon>
        <taxon>Ecdysozoa</taxon>
        <taxon>Arthropoda</taxon>
        <taxon>Hexapoda</taxon>
        <taxon>Insecta</taxon>
        <taxon>Pterygota</taxon>
        <taxon>Neoptera</taxon>
        <taxon>Endopterygota</taxon>
        <taxon>Diptera</taxon>
        <taxon>Brachycera</taxon>
        <taxon>Muscomorpha</taxon>
        <taxon>Ephydroidea</taxon>
        <taxon>Drosophilidae</taxon>
        <taxon>Drosophila</taxon>
        <taxon>Sophophora</taxon>
    </lineage>
</organism>
<gene>
    <name type="primary">Cp15</name>
    <name type="synonym">s15</name>
    <name type="ORF">CG6519</name>
</gene>
<comment type="function">
    <text>Chorion membrane (egg shell) protein; plays a role in protecting the egg from the environment.</text>
</comment>
<comment type="subcellular location">
    <subcellularLocation>
        <location>Secreted</location>
    </subcellularLocation>
</comment>
<comment type="similarity">
    <text evidence="2">Belongs to the chorion protein S15/S18 family.</text>
</comment>
<dbReference type="EMBL" id="X02497">
    <property type="protein sequence ID" value="CAA26329.1"/>
    <property type="molecule type" value="Genomic_DNA"/>
</dbReference>
<dbReference type="EMBL" id="X06257">
    <property type="protein sequence ID" value="CAA29603.1"/>
    <property type="molecule type" value="Genomic_DNA"/>
</dbReference>
<dbReference type="EMBL" id="EF441624">
    <property type="protein sequence ID" value="ABO71665.1"/>
    <property type="molecule type" value="Genomic_DNA"/>
</dbReference>
<dbReference type="EMBL" id="AE014296">
    <property type="protein sequence ID" value="AAF50374.1"/>
    <property type="molecule type" value="Genomic_DNA"/>
</dbReference>
<dbReference type="EMBL" id="BT031038">
    <property type="protein sequence ID" value="ABV82420.1"/>
    <property type="molecule type" value="mRNA"/>
</dbReference>
<dbReference type="RefSeq" id="NP_523979.1">
    <property type="nucleotide sequence ID" value="NM_079255.2"/>
</dbReference>
<dbReference type="BioGRID" id="64405">
    <property type="interactions" value="14"/>
</dbReference>
<dbReference type="DIP" id="DIP-18313N"/>
<dbReference type="FunCoup" id="P07185">
    <property type="interactions" value="3"/>
</dbReference>
<dbReference type="STRING" id="7227.FBpp0076299"/>
<dbReference type="PaxDb" id="7227-FBpp0076299"/>
<dbReference type="DNASU" id="38999"/>
<dbReference type="EnsemblMetazoa" id="FBtr0076572">
    <property type="protein sequence ID" value="FBpp0076299"/>
    <property type="gene ID" value="FBgn0000355"/>
</dbReference>
<dbReference type="GeneID" id="38999"/>
<dbReference type="KEGG" id="dme:Dmel_CG6519"/>
<dbReference type="AGR" id="FB:FBgn0000355"/>
<dbReference type="CTD" id="38999"/>
<dbReference type="FlyBase" id="FBgn0000355">
    <property type="gene designation" value="Cp15"/>
</dbReference>
<dbReference type="VEuPathDB" id="VectorBase:FBgn0000355"/>
<dbReference type="eggNOG" id="ENOG502TBSK">
    <property type="taxonomic scope" value="Eukaryota"/>
</dbReference>
<dbReference type="HOGENOM" id="CLU_2075586_0_0_1"/>
<dbReference type="InParanoid" id="P07185"/>
<dbReference type="OMA" id="CINANPY"/>
<dbReference type="OrthoDB" id="7865795at2759"/>
<dbReference type="PhylomeDB" id="P07185"/>
<dbReference type="BioGRID-ORCS" id="38999">
    <property type="hits" value="0 hits in 1 CRISPR screen"/>
</dbReference>
<dbReference type="GenomeRNAi" id="38999"/>
<dbReference type="PRO" id="PR:P07185"/>
<dbReference type="Proteomes" id="UP000000803">
    <property type="component" value="Chromosome 3L"/>
</dbReference>
<dbReference type="Bgee" id="FBgn0000355">
    <property type="expression patterns" value="Expressed in secondary oocyte and 67 other cell types or tissues"/>
</dbReference>
<dbReference type="GO" id="GO:0042600">
    <property type="term" value="C:egg chorion"/>
    <property type="evidence" value="ECO:0000305"/>
    <property type="project" value="FlyBase"/>
</dbReference>
<dbReference type="GO" id="GO:0005576">
    <property type="term" value="C:extracellular region"/>
    <property type="evidence" value="ECO:0007669"/>
    <property type="project" value="UniProtKB-SubCell"/>
</dbReference>
<dbReference type="GO" id="GO:0005213">
    <property type="term" value="F:structural constituent of egg chorion"/>
    <property type="evidence" value="ECO:0000305"/>
    <property type="project" value="FlyBase"/>
</dbReference>
<dbReference type="GO" id="GO:0007304">
    <property type="term" value="P:chorion-containing eggshell formation"/>
    <property type="evidence" value="ECO:0000270"/>
    <property type="project" value="FlyBase"/>
</dbReference>
<dbReference type="InterPro" id="IPR005649">
    <property type="entry name" value="Chorion_2"/>
</dbReference>
<dbReference type="Pfam" id="PF03964">
    <property type="entry name" value="Chorion_2"/>
    <property type="match status" value="1"/>
</dbReference>
<reference key="1">
    <citation type="journal article" date="1985" name="Chromosoma">
        <title>Coding and potential regulatory sequences of a cluster of chorion genes in Drosophila melanogaster.</title>
        <authorList>
            <person name="Wong Y.-C."/>
            <person name="Pustell J."/>
            <person name="Spoerel N."/>
            <person name="Kafatos F.C."/>
        </authorList>
    </citation>
    <scope>NUCLEOTIDE SEQUENCE [GENOMIC DNA]</scope>
</reference>
<reference key="2">
    <citation type="journal article" date="1985" name="Chromosoma">
        <title>DNA sequence of a 3.8 kilobase pair region controlling Drosophila chorion gene amplification.</title>
        <authorList>
            <person name="Levine J."/>
            <person name="Spradling A."/>
        </authorList>
    </citation>
    <scope>NUCLEOTIDE SEQUENCE [GENOMIC DNA]</scope>
    <source>
        <strain>Canton-S</strain>
    </source>
</reference>
<reference key="3">
    <citation type="journal article" date="2007" name="Mol. Biol. Evol.">
        <title>Rapid evolution of outer egg membrane proteins in the Drosophila melanogaster subgroup: a case of ecologically driven evolution of female reproductive traits.</title>
        <authorList>
            <person name="Jagadeeshan S."/>
            <person name="Singh R.S."/>
        </authorList>
    </citation>
    <scope>NUCLEOTIDE SEQUENCE [GENOMIC DNA]</scope>
</reference>
<reference key="4">
    <citation type="journal article" date="2000" name="Science">
        <title>The genome sequence of Drosophila melanogaster.</title>
        <authorList>
            <person name="Adams M.D."/>
            <person name="Celniker S.E."/>
            <person name="Holt R.A."/>
            <person name="Evans C.A."/>
            <person name="Gocayne J.D."/>
            <person name="Amanatides P.G."/>
            <person name="Scherer S.E."/>
            <person name="Li P.W."/>
            <person name="Hoskins R.A."/>
            <person name="Galle R.F."/>
            <person name="George R.A."/>
            <person name="Lewis S.E."/>
            <person name="Richards S."/>
            <person name="Ashburner M."/>
            <person name="Henderson S.N."/>
            <person name="Sutton G.G."/>
            <person name="Wortman J.R."/>
            <person name="Yandell M.D."/>
            <person name="Zhang Q."/>
            <person name="Chen L.X."/>
            <person name="Brandon R.C."/>
            <person name="Rogers Y.-H.C."/>
            <person name="Blazej R.G."/>
            <person name="Champe M."/>
            <person name="Pfeiffer B.D."/>
            <person name="Wan K.H."/>
            <person name="Doyle C."/>
            <person name="Baxter E.G."/>
            <person name="Helt G."/>
            <person name="Nelson C.R."/>
            <person name="Miklos G.L.G."/>
            <person name="Abril J.F."/>
            <person name="Agbayani A."/>
            <person name="An H.-J."/>
            <person name="Andrews-Pfannkoch C."/>
            <person name="Baldwin D."/>
            <person name="Ballew R.M."/>
            <person name="Basu A."/>
            <person name="Baxendale J."/>
            <person name="Bayraktaroglu L."/>
            <person name="Beasley E.M."/>
            <person name="Beeson K.Y."/>
            <person name="Benos P.V."/>
            <person name="Berman B.P."/>
            <person name="Bhandari D."/>
            <person name="Bolshakov S."/>
            <person name="Borkova D."/>
            <person name="Botchan M.R."/>
            <person name="Bouck J."/>
            <person name="Brokstein P."/>
            <person name="Brottier P."/>
            <person name="Burtis K.C."/>
            <person name="Busam D.A."/>
            <person name="Butler H."/>
            <person name="Cadieu E."/>
            <person name="Center A."/>
            <person name="Chandra I."/>
            <person name="Cherry J.M."/>
            <person name="Cawley S."/>
            <person name="Dahlke C."/>
            <person name="Davenport L.B."/>
            <person name="Davies P."/>
            <person name="de Pablos B."/>
            <person name="Delcher A."/>
            <person name="Deng Z."/>
            <person name="Mays A.D."/>
            <person name="Dew I."/>
            <person name="Dietz S.M."/>
            <person name="Dodson K."/>
            <person name="Doup L.E."/>
            <person name="Downes M."/>
            <person name="Dugan-Rocha S."/>
            <person name="Dunkov B.C."/>
            <person name="Dunn P."/>
            <person name="Durbin K.J."/>
            <person name="Evangelista C.C."/>
            <person name="Ferraz C."/>
            <person name="Ferriera S."/>
            <person name="Fleischmann W."/>
            <person name="Fosler C."/>
            <person name="Gabrielian A.E."/>
            <person name="Garg N.S."/>
            <person name="Gelbart W.M."/>
            <person name="Glasser K."/>
            <person name="Glodek A."/>
            <person name="Gong F."/>
            <person name="Gorrell J.H."/>
            <person name="Gu Z."/>
            <person name="Guan P."/>
            <person name="Harris M."/>
            <person name="Harris N.L."/>
            <person name="Harvey D.A."/>
            <person name="Heiman T.J."/>
            <person name="Hernandez J.R."/>
            <person name="Houck J."/>
            <person name="Hostin D."/>
            <person name="Houston K.A."/>
            <person name="Howland T.J."/>
            <person name="Wei M.-H."/>
            <person name="Ibegwam C."/>
            <person name="Jalali M."/>
            <person name="Kalush F."/>
            <person name="Karpen G.H."/>
            <person name="Ke Z."/>
            <person name="Kennison J.A."/>
            <person name="Ketchum K.A."/>
            <person name="Kimmel B.E."/>
            <person name="Kodira C.D."/>
            <person name="Kraft C.L."/>
            <person name="Kravitz S."/>
            <person name="Kulp D."/>
            <person name="Lai Z."/>
            <person name="Lasko P."/>
            <person name="Lei Y."/>
            <person name="Levitsky A.A."/>
            <person name="Li J.H."/>
            <person name="Li Z."/>
            <person name="Liang Y."/>
            <person name="Lin X."/>
            <person name="Liu X."/>
            <person name="Mattei B."/>
            <person name="McIntosh T.C."/>
            <person name="McLeod M.P."/>
            <person name="McPherson D."/>
            <person name="Merkulov G."/>
            <person name="Milshina N.V."/>
            <person name="Mobarry C."/>
            <person name="Morris J."/>
            <person name="Moshrefi A."/>
            <person name="Mount S.M."/>
            <person name="Moy M."/>
            <person name="Murphy B."/>
            <person name="Murphy L."/>
            <person name="Muzny D.M."/>
            <person name="Nelson D.L."/>
            <person name="Nelson D.R."/>
            <person name="Nelson K.A."/>
            <person name="Nixon K."/>
            <person name="Nusskern D.R."/>
            <person name="Pacleb J.M."/>
            <person name="Palazzolo M."/>
            <person name="Pittman G.S."/>
            <person name="Pan S."/>
            <person name="Pollard J."/>
            <person name="Puri V."/>
            <person name="Reese M.G."/>
            <person name="Reinert K."/>
            <person name="Remington K."/>
            <person name="Saunders R.D.C."/>
            <person name="Scheeler F."/>
            <person name="Shen H."/>
            <person name="Shue B.C."/>
            <person name="Siden-Kiamos I."/>
            <person name="Simpson M."/>
            <person name="Skupski M.P."/>
            <person name="Smith T.J."/>
            <person name="Spier E."/>
            <person name="Spradling A.C."/>
            <person name="Stapleton M."/>
            <person name="Strong R."/>
            <person name="Sun E."/>
            <person name="Svirskas R."/>
            <person name="Tector C."/>
            <person name="Turner R."/>
            <person name="Venter E."/>
            <person name="Wang A.H."/>
            <person name="Wang X."/>
            <person name="Wang Z.-Y."/>
            <person name="Wassarman D.A."/>
            <person name="Weinstock G.M."/>
            <person name="Weissenbach J."/>
            <person name="Williams S.M."/>
            <person name="Woodage T."/>
            <person name="Worley K.C."/>
            <person name="Wu D."/>
            <person name="Yang S."/>
            <person name="Yao Q.A."/>
            <person name="Ye J."/>
            <person name="Yeh R.-F."/>
            <person name="Zaveri J.S."/>
            <person name="Zhan M."/>
            <person name="Zhang G."/>
            <person name="Zhao Q."/>
            <person name="Zheng L."/>
            <person name="Zheng X.H."/>
            <person name="Zhong F.N."/>
            <person name="Zhong W."/>
            <person name="Zhou X."/>
            <person name="Zhu S.C."/>
            <person name="Zhu X."/>
            <person name="Smith H.O."/>
            <person name="Gibbs R.A."/>
            <person name="Myers E.W."/>
            <person name="Rubin G.M."/>
            <person name="Venter J.C."/>
        </authorList>
    </citation>
    <scope>NUCLEOTIDE SEQUENCE [LARGE SCALE GENOMIC DNA]</scope>
    <source>
        <strain>Berkeley</strain>
    </source>
</reference>
<reference key="5">
    <citation type="journal article" date="2002" name="Genome Biol.">
        <title>Annotation of the Drosophila melanogaster euchromatic genome: a systematic review.</title>
        <authorList>
            <person name="Misra S."/>
            <person name="Crosby M.A."/>
            <person name="Mungall C.J."/>
            <person name="Matthews B.B."/>
            <person name="Campbell K.S."/>
            <person name="Hradecky P."/>
            <person name="Huang Y."/>
            <person name="Kaminker J.S."/>
            <person name="Millburn G.H."/>
            <person name="Prochnik S.E."/>
            <person name="Smith C.D."/>
            <person name="Tupy J.L."/>
            <person name="Whitfield E.J."/>
            <person name="Bayraktaroglu L."/>
            <person name="Berman B.P."/>
            <person name="Bettencourt B.R."/>
            <person name="Celniker S.E."/>
            <person name="de Grey A.D.N.J."/>
            <person name="Drysdale R.A."/>
            <person name="Harris N.L."/>
            <person name="Richter J."/>
            <person name="Russo S."/>
            <person name="Schroeder A.J."/>
            <person name="Shu S.Q."/>
            <person name="Stapleton M."/>
            <person name="Yamada C."/>
            <person name="Ashburner M."/>
            <person name="Gelbart W.M."/>
            <person name="Rubin G.M."/>
            <person name="Lewis S.E."/>
        </authorList>
    </citation>
    <scope>GENOME REANNOTATION</scope>
    <source>
        <strain>Berkeley</strain>
    </source>
</reference>
<reference key="6">
    <citation type="submission" date="2007-10" db="EMBL/GenBank/DDBJ databases">
        <authorList>
            <person name="Stapleton M."/>
            <person name="Carlson J.W."/>
            <person name="Frise E."/>
            <person name="Kapadia B."/>
            <person name="Park S."/>
            <person name="Wan K.H."/>
            <person name="Yu C."/>
            <person name="Celniker S.E."/>
        </authorList>
    </citation>
    <scope>NUCLEOTIDE SEQUENCE [LARGE SCALE MRNA]</scope>
    <source>
        <strain>Berkeley</strain>
    </source>
</reference>
<sequence>MKYLIVCVTLALFAYINASPAYGNRGGYGGGYGGGYGPVQRVVYEEVPAYGPSRGYNSYPRSLRSEGNGGSAAAAAAASAAAVNPGTYKQYAIPSYELDGARGYEIGHGYGQRAY</sequence>